<accession>C4K4F9</accession>
<reference key="1">
    <citation type="journal article" date="2009" name="Proc. Natl. Acad. Sci. U.S.A.">
        <title>Hamiltonella defensa, genome evolution of protective bacterial endosymbiont from pathogenic ancestors.</title>
        <authorList>
            <person name="Degnan P.H."/>
            <person name="Yu Y."/>
            <person name="Sisneros N."/>
            <person name="Wing R.A."/>
            <person name="Moran N.A."/>
        </authorList>
    </citation>
    <scope>NUCLEOTIDE SEQUENCE [LARGE SCALE GENOMIC DNA]</scope>
    <source>
        <strain>5AT</strain>
    </source>
</reference>
<sequence length="701" mass="78039">MARKTPIKHYRNIGISAHIDAGKTTTTERILLYTGVNHKIGEVHDGAATMDWMEQEKERGITITSAATTAFWSGMAKQFEPHRINIIDTPGHVDFTIEVERSMRVLDGAVMVYCAVGGVQPQSETVWRQANKYHVPRIAFVNKMDRMGANFLRVVEQIKTRLAANPVPIQLAIGSEEKFTGVIDLVKMKAIHWNEKDQGLTFEYQDVPDDMQQLAEKWRQNMIESAAEASEELMDKYLGGEELTEEEIKQGLRQRALKNEIILVTCGSAFKNKGVQAMLDAVIEYLPAPIDVEAIKGVLDDKGTPVIRHSKDEEPFSALAFKIATDPFVGNLTFFRVYSGVVNSGDTVLNSVKGQKERIGRIVQMHANKREEIKEVRAGDIAAAIGLKDATTGDTLCDLAHPVILERMEFPEPVISVALEPKTKADQEKMGIALGRLAKEDPSFRVWTDEESSQTIIAGMGELHLDILVDRMKREFNVEANVGKPQVAYRETIRKTVEQEGKFIRQSGGRGQYGHVWLRIEPLEPGGKGYEFLNEIVGGVIPKEYIPAVDKGVQEQLKNGVLAAYPVVDVRVAVFDGSYHDVDSSEIAFKVAGAMAFKEGFMKAKPVLLEPIMKIEVETPEEYMGDVIGDLNRRRGVIDGMDDTSTGKTIRAQVPLSEMFGYATDLRSQTQGRASYSMEFLQYSEAPANVSKTIIESRNTK</sequence>
<dbReference type="EMBL" id="CP001277">
    <property type="protein sequence ID" value="ACQ67452.1"/>
    <property type="molecule type" value="Genomic_DNA"/>
</dbReference>
<dbReference type="RefSeq" id="WP_015873273.1">
    <property type="nucleotide sequence ID" value="NC_012751.1"/>
</dbReference>
<dbReference type="SMR" id="C4K4F9"/>
<dbReference type="STRING" id="572265.HDEF_0719"/>
<dbReference type="GeneID" id="66260572"/>
<dbReference type="KEGG" id="hde:HDEF_0719"/>
<dbReference type="eggNOG" id="COG0480">
    <property type="taxonomic scope" value="Bacteria"/>
</dbReference>
<dbReference type="HOGENOM" id="CLU_002794_4_1_6"/>
<dbReference type="Proteomes" id="UP000002334">
    <property type="component" value="Chromosome"/>
</dbReference>
<dbReference type="GO" id="GO:0005737">
    <property type="term" value="C:cytoplasm"/>
    <property type="evidence" value="ECO:0007669"/>
    <property type="project" value="UniProtKB-SubCell"/>
</dbReference>
<dbReference type="GO" id="GO:0005525">
    <property type="term" value="F:GTP binding"/>
    <property type="evidence" value="ECO:0007669"/>
    <property type="project" value="UniProtKB-UniRule"/>
</dbReference>
<dbReference type="GO" id="GO:0003924">
    <property type="term" value="F:GTPase activity"/>
    <property type="evidence" value="ECO:0007669"/>
    <property type="project" value="InterPro"/>
</dbReference>
<dbReference type="GO" id="GO:0097216">
    <property type="term" value="F:guanosine tetraphosphate binding"/>
    <property type="evidence" value="ECO:0007669"/>
    <property type="project" value="UniProtKB-ARBA"/>
</dbReference>
<dbReference type="GO" id="GO:0003746">
    <property type="term" value="F:translation elongation factor activity"/>
    <property type="evidence" value="ECO:0007669"/>
    <property type="project" value="UniProtKB-UniRule"/>
</dbReference>
<dbReference type="GO" id="GO:0032790">
    <property type="term" value="P:ribosome disassembly"/>
    <property type="evidence" value="ECO:0007669"/>
    <property type="project" value="TreeGrafter"/>
</dbReference>
<dbReference type="CDD" id="cd01886">
    <property type="entry name" value="EF-G"/>
    <property type="match status" value="1"/>
</dbReference>
<dbReference type="CDD" id="cd16262">
    <property type="entry name" value="EFG_III"/>
    <property type="match status" value="1"/>
</dbReference>
<dbReference type="CDD" id="cd01434">
    <property type="entry name" value="EFG_mtEFG1_IV"/>
    <property type="match status" value="1"/>
</dbReference>
<dbReference type="CDD" id="cd03713">
    <property type="entry name" value="EFG_mtEFG_C"/>
    <property type="match status" value="1"/>
</dbReference>
<dbReference type="CDD" id="cd04088">
    <property type="entry name" value="EFG_mtEFG_II"/>
    <property type="match status" value="1"/>
</dbReference>
<dbReference type="FunFam" id="2.40.30.10:FF:000006">
    <property type="entry name" value="Elongation factor G"/>
    <property type="match status" value="1"/>
</dbReference>
<dbReference type="FunFam" id="3.30.230.10:FF:000003">
    <property type="entry name" value="Elongation factor G"/>
    <property type="match status" value="1"/>
</dbReference>
<dbReference type="FunFam" id="3.30.70.240:FF:000001">
    <property type="entry name" value="Elongation factor G"/>
    <property type="match status" value="1"/>
</dbReference>
<dbReference type="FunFam" id="3.30.70.870:FF:000001">
    <property type="entry name" value="Elongation factor G"/>
    <property type="match status" value="1"/>
</dbReference>
<dbReference type="FunFam" id="3.40.50.300:FF:000029">
    <property type="entry name" value="Elongation factor G"/>
    <property type="match status" value="1"/>
</dbReference>
<dbReference type="Gene3D" id="3.30.230.10">
    <property type="match status" value="1"/>
</dbReference>
<dbReference type="Gene3D" id="3.30.70.240">
    <property type="match status" value="1"/>
</dbReference>
<dbReference type="Gene3D" id="3.30.70.870">
    <property type="entry name" value="Elongation Factor G (Translational Gtpase), domain 3"/>
    <property type="match status" value="1"/>
</dbReference>
<dbReference type="Gene3D" id="3.40.50.300">
    <property type="entry name" value="P-loop containing nucleotide triphosphate hydrolases"/>
    <property type="match status" value="1"/>
</dbReference>
<dbReference type="Gene3D" id="2.40.30.10">
    <property type="entry name" value="Translation factors"/>
    <property type="match status" value="1"/>
</dbReference>
<dbReference type="HAMAP" id="MF_00054_B">
    <property type="entry name" value="EF_G_EF_2_B"/>
    <property type="match status" value="1"/>
</dbReference>
<dbReference type="InterPro" id="IPR041095">
    <property type="entry name" value="EFG_II"/>
</dbReference>
<dbReference type="InterPro" id="IPR009022">
    <property type="entry name" value="EFG_III"/>
</dbReference>
<dbReference type="InterPro" id="IPR035647">
    <property type="entry name" value="EFG_III/V"/>
</dbReference>
<dbReference type="InterPro" id="IPR047872">
    <property type="entry name" value="EFG_IV"/>
</dbReference>
<dbReference type="InterPro" id="IPR035649">
    <property type="entry name" value="EFG_V"/>
</dbReference>
<dbReference type="InterPro" id="IPR000640">
    <property type="entry name" value="EFG_V-like"/>
</dbReference>
<dbReference type="InterPro" id="IPR004161">
    <property type="entry name" value="EFTu-like_2"/>
</dbReference>
<dbReference type="InterPro" id="IPR031157">
    <property type="entry name" value="G_TR_CS"/>
</dbReference>
<dbReference type="InterPro" id="IPR027417">
    <property type="entry name" value="P-loop_NTPase"/>
</dbReference>
<dbReference type="InterPro" id="IPR020568">
    <property type="entry name" value="Ribosomal_Su5_D2-typ_SF"/>
</dbReference>
<dbReference type="InterPro" id="IPR014721">
    <property type="entry name" value="Ribsml_uS5_D2-typ_fold_subgr"/>
</dbReference>
<dbReference type="InterPro" id="IPR005225">
    <property type="entry name" value="Small_GTP-bd"/>
</dbReference>
<dbReference type="InterPro" id="IPR000795">
    <property type="entry name" value="T_Tr_GTP-bd_dom"/>
</dbReference>
<dbReference type="InterPro" id="IPR009000">
    <property type="entry name" value="Transl_B-barrel_sf"/>
</dbReference>
<dbReference type="InterPro" id="IPR004540">
    <property type="entry name" value="Transl_elong_EFG/EF2"/>
</dbReference>
<dbReference type="InterPro" id="IPR005517">
    <property type="entry name" value="Transl_elong_EFG/EF2_IV"/>
</dbReference>
<dbReference type="NCBIfam" id="TIGR00484">
    <property type="entry name" value="EF-G"/>
    <property type="match status" value="1"/>
</dbReference>
<dbReference type="NCBIfam" id="NF009381">
    <property type="entry name" value="PRK12740.1-5"/>
    <property type="match status" value="1"/>
</dbReference>
<dbReference type="NCBIfam" id="TIGR00231">
    <property type="entry name" value="small_GTP"/>
    <property type="match status" value="1"/>
</dbReference>
<dbReference type="PANTHER" id="PTHR43261:SF1">
    <property type="entry name" value="RIBOSOME-RELEASING FACTOR 2, MITOCHONDRIAL"/>
    <property type="match status" value="1"/>
</dbReference>
<dbReference type="PANTHER" id="PTHR43261">
    <property type="entry name" value="TRANSLATION ELONGATION FACTOR G-RELATED"/>
    <property type="match status" value="1"/>
</dbReference>
<dbReference type="Pfam" id="PF00679">
    <property type="entry name" value="EFG_C"/>
    <property type="match status" value="1"/>
</dbReference>
<dbReference type="Pfam" id="PF14492">
    <property type="entry name" value="EFG_III"/>
    <property type="match status" value="1"/>
</dbReference>
<dbReference type="Pfam" id="PF03764">
    <property type="entry name" value="EFG_IV"/>
    <property type="match status" value="1"/>
</dbReference>
<dbReference type="Pfam" id="PF00009">
    <property type="entry name" value="GTP_EFTU"/>
    <property type="match status" value="1"/>
</dbReference>
<dbReference type="Pfam" id="PF03144">
    <property type="entry name" value="GTP_EFTU_D2"/>
    <property type="match status" value="1"/>
</dbReference>
<dbReference type="PRINTS" id="PR00315">
    <property type="entry name" value="ELONGATNFCT"/>
</dbReference>
<dbReference type="SMART" id="SM00838">
    <property type="entry name" value="EFG_C"/>
    <property type="match status" value="1"/>
</dbReference>
<dbReference type="SMART" id="SM00889">
    <property type="entry name" value="EFG_IV"/>
    <property type="match status" value="1"/>
</dbReference>
<dbReference type="SUPFAM" id="SSF54980">
    <property type="entry name" value="EF-G C-terminal domain-like"/>
    <property type="match status" value="2"/>
</dbReference>
<dbReference type="SUPFAM" id="SSF52540">
    <property type="entry name" value="P-loop containing nucleoside triphosphate hydrolases"/>
    <property type="match status" value="1"/>
</dbReference>
<dbReference type="SUPFAM" id="SSF54211">
    <property type="entry name" value="Ribosomal protein S5 domain 2-like"/>
    <property type="match status" value="1"/>
</dbReference>
<dbReference type="SUPFAM" id="SSF50447">
    <property type="entry name" value="Translation proteins"/>
    <property type="match status" value="1"/>
</dbReference>
<dbReference type="PROSITE" id="PS00301">
    <property type="entry name" value="G_TR_1"/>
    <property type="match status" value="1"/>
</dbReference>
<dbReference type="PROSITE" id="PS51722">
    <property type="entry name" value="G_TR_2"/>
    <property type="match status" value="1"/>
</dbReference>
<protein>
    <recommendedName>
        <fullName evidence="1">Elongation factor G</fullName>
        <shortName evidence="1">EF-G</shortName>
    </recommendedName>
</protein>
<feature type="chain" id="PRO_1000202304" description="Elongation factor G">
    <location>
        <begin position="1"/>
        <end position="701"/>
    </location>
</feature>
<feature type="domain" description="tr-type G">
    <location>
        <begin position="8"/>
        <end position="290"/>
    </location>
</feature>
<feature type="binding site" evidence="1">
    <location>
        <begin position="17"/>
        <end position="24"/>
    </location>
    <ligand>
        <name>GTP</name>
        <dbReference type="ChEBI" id="CHEBI:37565"/>
    </ligand>
</feature>
<feature type="binding site" evidence="1">
    <location>
        <begin position="88"/>
        <end position="92"/>
    </location>
    <ligand>
        <name>GTP</name>
        <dbReference type="ChEBI" id="CHEBI:37565"/>
    </ligand>
</feature>
<feature type="binding site" evidence="1">
    <location>
        <begin position="142"/>
        <end position="145"/>
    </location>
    <ligand>
        <name>GTP</name>
        <dbReference type="ChEBI" id="CHEBI:37565"/>
    </ligand>
</feature>
<organism>
    <name type="scientific">Hamiltonella defensa subsp. Acyrthosiphon pisum (strain 5AT)</name>
    <dbReference type="NCBI Taxonomy" id="572265"/>
    <lineage>
        <taxon>Bacteria</taxon>
        <taxon>Pseudomonadati</taxon>
        <taxon>Pseudomonadota</taxon>
        <taxon>Gammaproteobacteria</taxon>
        <taxon>Enterobacterales</taxon>
        <taxon>Enterobacteriaceae</taxon>
        <taxon>aphid secondary symbionts</taxon>
        <taxon>Candidatus Hamiltonella</taxon>
    </lineage>
</organism>
<gene>
    <name evidence="1" type="primary">fusA</name>
    <name type="ordered locus">HDEF_0719</name>
</gene>
<comment type="function">
    <text evidence="1">Catalyzes the GTP-dependent ribosomal translocation step during translation elongation. During this step, the ribosome changes from the pre-translocational (PRE) to the post-translocational (POST) state as the newly formed A-site-bound peptidyl-tRNA and P-site-bound deacylated tRNA move to the P and E sites, respectively. Catalyzes the coordinated movement of the two tRNA molecules, the mRNA and conformational changes in the ribosome.</text>
</comment>
<comment type="subcellular location">
    <subcellularLocation>
        <location evidence="1">Cytoplasm</location>
    </subcellularLocation>
</comment>
<comment type="similarity">
    <text evidence="1">Belongs to the TRAFAC class translation factor GTPase superfamily. Classic translation factor GTPase family. EF-G/EF-2 subfamily.</text>
</comment>
<keyword id="KW-0963">Cytoplasm</keyword>
<keyword id="KW-0251">Elongation factor</keyword>
<keyword id="KW-0342">GTP-binding</keyword>
<keyword id="KW-0547">Nucleotide-binding</keyword>
<keyword id="KW-0648">Protein biosynthesis</keyword>
<evidence type="ECO:0000255" key="1">
    <source>
        <dbReference type="HAMAP-Rule" id="MF_00054"/>
    </source>
</evidence>
<name>EFG_HAMD5</name>
<proteinExistence type="inferred from homology"/>